<reference key="1">
    <citation type="journal article" date="2001" name="Proc. Natl. Acad. Sci. U.S.A.">
        <title>The complete genome of the crenarchaeon Sulfolobus solfataricus P2.</title>
        <authorList>
            <person name="She Q."/>
            <person name="Singh R.K."/>
            <person name="Confalonieri F."/>
            <person name="Zivanovic Y."/>
            <person name="Allard G."/>
            <person name="Awayez M.J."/>
            <person name="Chan-Weiher C.C.-Y."/>
            <person name="Clausen I.G."/>
            <person name="Curtis B.A."/>
            <person name="De Moors A."/>
            <person name="Erauso G."/>
            <person name="Fletcher C."/>
            <person name="Gordon P.M.K."/>
            <person name="Heikamp-de Jong I."/>
            <person name="Jeffries A.C."/>
            <person name="Kozera C.J."/>
            <person name="Medina N."/>
            <person name="Peng X."/>
            <person name="Thi-Ngoc H.P."/>
            <person name="Redder P."/>
            <person name="Schenk M.E."/>
            <person name="Theriault C."/>
            <person name="Tolstrup N."/>
            <person name="Charlebois R.L."/>
            <person name="Doolittle W.F."/>
            <person name="Duguet M."/>
            <person name="Gaasterland T."/>
            <person name="Garrett R.A."/>
            <person name="Ragan M.A."/>
            <person name="Sensen C.W."/>
            <person name="Van der Oost J."/>
        </authorList>
    </citation>
    <scope>NUCLEOTIDE SEQUENCE [LARGE SCALE GENOMIC DNA]</scope>
    <source>
        <strain>ATCC 35092 / DSM 1617 / JCM 11322 / P2</strain>
    </source>
</reference>
<reference key="2">
    <citation type="journal article" date="2004" name="J. Mol. Biol.">
        <title>The heterodimeric primase of the hyperthermophilic archaeon Sulfolobus solfataricus possesses DNA and RNA primase, polymerase and 3'-terminal nucleotidyl transferase activities.</title>
        <authorList>
            <person name="Lao-Sirieix S.H."/>
            <person name="Bell S.D."/>
        </authorList>
    </citation>
    <scope>FUNCTION</scope>
    <scope>SUBUNIT</scope>
    <scope>GENE NAME</scope>
</reference>
<reference key="3">
    <citation type="journal article" date="2005" name="Nat. Struct. Mol. Biol.">
        <title>Structure of the heterodimeric core primase.</title>
        <authorList>
            <person name="Lao-Sirieix S.H."/>
            <person name="Nookala R.K."/>
            <person name="Roversi P."/>
            <person name="Bell S.D."/>
            <person name="Pellegrini L."/>
        </authorList>
    </citation>
    <scope>X-RAY CRYSTALLOGRAPHY (3.33 ANGSTROMS) IN COMPLEX WITH ZINC</scope>
    <scope>SUBUNIT</scope>
    <scope>MUTAGENESIS OF PHE-164 AND GLY-165</scope>
</reference>
<proteinExistence type="evidence at protein level"/>
<organism>
    <name type="scientific">Saccharolobus solfataricus (strain ATCC 35092 / DSM 1617 / JCM 11322 / P2)</name>
    <name type="common">Sulfolobus solfataricus</name>
    <dbReference type="NCBI Taxonomy" id="273057"/>
    <lineage>
        <taxon>Archaea</taxon>
        <taxon>Thermoproteota</taxon>
        <taxon>Thermoprotei</taxon>
        <taxon>Sulfolobales</taxon>
        <taxon>Sulfolobaceae</taxon>
        <taxon>Saccharolobus</taxon>
    </lineage>
</organism>
<name>PRIS_SACS2</name>
<accession>Q97Z83</accession>
<sequence length="330" mass="37598">MGTFTLHQGQTNLIKSFFRNYYLNAELELPKDMELREFALQPFGSDTYVRHLSFSSSEELRDYLVNRNLPLHLFYSSARYQLPSARNMEEKAWMGSDLLFDIDADHLCKLRSIRFCPVCGNAVVSEKCERDNVETLEYVEMTSECIKRGLEQTRNLVEILEDDFGLKPKVYFSGNRGFHVQVDCYGNCALLDSDERKEIAEYVMGIGVPGYPGGSENAPGWVGRKNRGINGVTIDEQVTIDVKRLIRIPNSLHGKSGLIVKRVPNLDDFEFNETLSPFTGYTIFLPYITIETEVLGSIIKLNRGIPIKIKSSIGIYLHLRNLGEVKAYVR</sequence>
<dbReference type="EC" id="2.7.7.-" evidence="1"/>
<dbReference type="EMBL" id="AE006641">
    <property type="protein sequence ID" value="AAK41310.1"/>
    <property type="molecule type" value="Genomic_DNA"/>
</dbReference>
<dbReference type="PIR" id="G90256">
    <property type="entry name" value="G90256"/>
</dbReference>
<dbReference type="RefSeq" id="WP_009989180.1">
    <property type="nucleotide sequence ID" value="NC_002754.1"/>
</dbReference>
<dbReference type="PDB" id="1ZT2">
    <property type="method" value="X-ray"/>
    <property type="resolution" value="3.33 A"/>
    <property type="chains" value="A/C=1-330"/>
</dbReference>
<dbReference type="PDB" id="5OF3">
    <property type="method" value="X-ray"/>
    <property type="resolution" value="2.91 A"/>
    <property type="chains" value="A/D=1-330"/>
</dbReference>
<dbReference type="PDB" id="5OFN">
    <property type="method" value="X-ray"/>
    <property type="resolution" value="3.00 A"/>
    <property type="chains" value="A=1-330"/>
</dbReference>
<dbReference type="PDBsum" id="1ZT2"/>
<dbReference type="PDBsum" id="5OF3"/>
<dbReference type="PDBsum" id="5OFN"/>
<dbReference type="SMR" id="Q97Z83"/>
<dbReference type="DIP" id="DIP-42889N"/>
<dbReference type="FunCoup" id="Q97Z83">
    <property type="interactions" value="1"/>
</dbReference>
<dbReference type="IntAct" id="Q97Z83">
    <property type="interactions" value="2"/>
</dbReference>
<dbReference type="MINT" id="Q97Z83"/>
<dbReference type="STRING" id="273057.SSO1048"/>
<dbReference type="PaxDb" id="273057-SSO1048"/>
<dbReference type="EnsemblBacteria" id="AAK41310">
    <property type="protein sequence ID" value="AAK41310"/>
    <property type="gene ID" value="SSO1048"/>
</dbReference>
<dbReference type="GeneID" id="44129977"/>
<dbReference type="KEGG" id="sso:SSO1048"/>
<dbReference type="PATRIC" id="fig|273057.12.peg.1042"/>
<dbReference type="eggNOG" id="arCOG04110">
    <property type="taxonomic scope" value="Archaea"/>
</dbReference>
<dbReference type="HOGENOM" id="CLU_056123_0_0_2"/>
<dbReference type="InParanoid" id="Q97Z83"/>
<dbReference type="PhylomeDB" id="Q97Z83"/>
<dbReference type="BRENDA" id="2.7.7.102">
    <property type="organism ID" value="6163"/>
</dbReference>
<dbReference type="BRENDA" id="2.7.7.B16">
    <property type="organism ID" value="6163"/>
</dbReference>
<dbReference type="EvolutionaryTrace" id="Q97Z83"/>
<dbReference type="Proteomes" id="UP000001974">
    <property type="component" value="Chromosome"/>
</dbReference>
<dbReference type="GO" id="GO:0000428">
    <property type="term" value="C:DNA-directed RNA polymerase complex"/>
    <property type="evidence" value="ECO:0007669"/>
    <property type="project" value="UniProtKB-KW"/>
</dbReference>
<dbReference type="GO" id="GO:1990077">
    <property type="term" value="C:primosome complex"/>
    <property type="evidence" value="ECO:0007669"/>
    <property type="project" value="UniProtKB-KW"/>
</dbReference>
<dbReference type="GO" id="GO:0003899">
    <property type="term" value="F:DNA-directed RNA polymerase activity"/>
    <property type="evidence" value="ECO:0007669"/>
    <property type="project" value="InterPro"/>
</dbReference>
<dbReference type="GO" id="GO:0046872">
    <property type="term" value="F:metal ion binding"/>
    <property type="evidence" value="ECO:0007669"/>
    <property type="project" value="UniProtKB-KW"/>
</dbReference>
<dbReference type="GO" id="GO:0006269">
    <property type="term" value="P:DNA replication, synthesis of primer"/>
    <property type="evidence" value="ECO:0000318"/>
    <property type="project" value="GO_Central"/>
</dbReference>
<dbReference type="CDD" id="cd04860">
    <property type="entry name" value="AE_Prim_S"/>
    <property type="match status" value="1"/>
</dbReference>
<dbReference type="FunFam" id="3.90.920.10:FF:000006">
    <property type="entry name" value="DNA primase small subunit PriS"/>
    <property type="match status" value="1"/>
</dbReference>
<dbReference type="Gene3D" id="3.90.920.10">
    <property type="entry name" value="DNA primase, PRIM domain"/>
    <property type="match status" value="1"/>
</dbReference>
<dbReference type="HAMAP" id="MF_00700">
    <property type="entry name" value="DNA_primase_sml_arc"/>
    <property type="match status" value="1"/>
</dbReference>
<dbReference type="InterPro" id="IPR002755">
    <property type="entry name" value="DNA_primase_S"/>
</dbReference>
<dbReference type="InterPro" id="IPR014052">
    <property type="entry name" value="DNA_primase_ssu_euk/arc"/>
</dbReference>
<dbReference type="InterPro" id="IPR023639">
    <property type="entry name" value="DNA_primase_ssu_PriS"/>
</dbReference>
<dbReference type="NCBIfam" id="NF001641">
    <property type="entry name" value="PRK00419.1-3"/>
    <property type="match status" value="1"/>
</dbReference>
<dbReference type="PANTHER" id="PTHR10536">
    <property type="entry name" value="DNA PRIMASE SMALL SUBUNIT"/>
    <property type="match status" value="1"/>
</dbReference>
<dbReference type="Pfam" id="PF01896">
    <property type="entry name" value="DNA_primase_S"/>
    <property type="match status" value="1"/>
</dbReference>
<dbReference type="Pfam" id="PF20873">
    <property type="entry name" value="PriS_C"/>
    <property type="match status" value="1"/>
</dbReference>
<dbReference type="SUPFAM" id="SSF56747">
    <property type="entry name" value="Prim-pol domain"/>
    <property type="match status" value="1"/>
</dbReference>
<protein>
    <recommendedName>
        <fullName evidence="1">DNA primase small subunit PriS</fullName>
        <ecNumber evidence="1">2.7.7.-</ecNumber>
    </recommendedName>
</protein>
<feature type="chain" id="PRO_0000046754" description="DNA primase small subunit PriS">
    <location>
        <begin position="1"/>
        <end position="330"/>
    </location>
</feature>
<feature type="active site" evidence="1">
    <location>
        <position position="101"/>
    </location>
</feature>
<feature type="active site" evidence="1">
    <location>
        <position position="103"/>
    </location>
</feature>
<feature type="active site" evidence="1">
    <location>
        <position position="235"/>
    </location>
</feature>
<feature type="binding site" evidence="3">
    <location>
        <position position="116"/>
    </location>
    <ligand>
        <name>Zn(2+)</name>
        <dbReference type="ChEBI" id="CHEBI:29105"/>
    </ligand>
</feature>
<feature type="binding site" evidence="3">
    <location>
        <position position="119"/>
    </location>
    <ligand>
        <name>Zn(2+)</name>
        <dbReference type="ChEBI" id="CHEBI:29105"/>
    </ligand>
</feature>
<feature type="binding site" evidence="3">
    <location>
        <position position="128"/>
    </location>
    <ligand>
        <name>Zn(2+)</name>
        <dbReference type="ChEBI" id="CHEBI:29105"/>
    </ligand>
</feature>
<feature type="binding site" evidence="3">
    <location>
        <position position="131"/>
    </location>
    <ligand>
        <name>Zn(2+)</name>
        <dbReference type="ChEBI" id="CHEBI:29105"/>
    </ligand>
</feature>
<feature type="mutagenesis site" description="Strong decrease in interaction with PriL." evidence="3">
    <original>F</original>
    <variation>E</variation>
    <location>
        <position position="164"/>
    </location>
</feature>
<feature type="mutagenesis site" description="Partial destabilization of PriS-PriL complex." evidence="3">
    <original>G</original>
    <variation>I</variation>
    <location>
        <position position="165"/>
    </location>
</feature>
<feature type="helix" evidence="6">
    <location>
        <begin position="13"/>
        <end position="24"/>
    </location>
</feature>
<feature type="helix" evidence="6">
    <location>
        <begin position="33"/>
        <end position="35"/>
    </location>
</feature>
<feature type="strand" evidence="6">
    <location>
        <begin position="38"/>
        <end position="42"/>
    </location>
</feature>
<feature type="strand" evidence="6">
    <location>
        <begin position="49"/>
        <end position="52"/>
    </location>
</feature>
<feature type="helix" evidence="6">
    <location>
        <begin position="57"/>
        <end position="66"/>
    </location>
</feature>
<feature type="strand" evidence="6">
    <location>
        <begin position="70"/>
        <end position="82"/>
    </location>
</feature>
<feature type="helix" evidence="6">
    <location>
        <begin position="88"/>
        <end position="91"/>
    </location>
</feature>
<feature type="strand" evidence="6">
    <location>
        <begin position="93"/>
        <end position="96"/>
    </location>
</feature>
<feature type="strand" evidence="6">
    <location>
        <begin position="98"/>
        <end position="103"/>
    </location>
</feature>
<feature type="turn" evidence="6">
    <location>
        <begin position="104"/>
        <end position="108"/>
    </location>
</feature>
<feature type="strand" evidence="6">
    <location>
        <begin position="112"/>
        <end position="115"/>
    </location>
</feature>
<feature type="turn" evidence="6">
    <location>
        <begin position="117"/>
        <end position="119"/>
    </location>
</feature>
<feature type="strand" evidence="6">
    <location>
        <begin position="125"/>
        <end position="127"/>
    </location>
</feature>
<feature type="turn" evidence="6">
    <location>
        <begin position="129"/>
        <end position="131"/>
    </location>
</feature>
<feature type="strand" evidence="6">
    <location>
        <begin position="136"/>
        <end position="139"/>
    </location>
</feature>
<feature type="helix" evidence="6">
    <location>
        <begin position="143"/>
        <end position="162"/>
    </location>
</feature>
<feature type="strand" evidence="6">
    <location>
        <begin position="169"/>
        <end position="172"/>
    </location>
</feature>
<feature type="strand" evidence="6">
    <location>
        <begin position="174"/>
        <end position="182"/>
    </location>
</feature>
<feature type="turn" evidence="6">
    <location>
        <begin position="187"/>
        <end position="190"/>
    </location>
</feature>
<feature type="helix" evidence="6">
    <location>
        <begin position="193"/>
        <end position="203"/>
    </location>
</feature>
<feature type="helix" evidence="6">
    <location>
        <begin position="220"/>
        <end position="226"/>
    </location>
</feature>
<feature type="helix" evidence="6">
    <location>
        <begin position="236"/>
        <end position="240"/>
    </location>
</feature>
<feature type="strand" evidence="6">
    <location>
        <begin position="245"/>
        <end position="247"/>
    </location>
</feature>
<feature type="turn" evidence="6">
    <location>
        <begin position="254"/>
        <end position="256"/>
    </location>
</feature>
<feature type="strand" evidence="5">
    <location>
        <begin position="262"/>
        <end position="264"/>
    </location>
</feature>
<feature type="helix" evidence="7">
    <location>
        <begin position="266"/>
        <end position="268"/>
    </location>
</feature>
<feature type="helix" evidence="6">
    <location>
        <begin position="273"/>
        <end position="275"/>
    </location>
</feature>
<feature type="strand" evidence="6">
    <location>
        <begin position="280"/>
        <end position="288"/>
    </location>
</feature>
<feature type="strand" evidence="6">
    <location>
        <begin position="290"/>
        <end position="294"/>
    </location>
</feature>
<feature type="strand" evidence="6">
    <location>
        <begin position="297"/>
        <end position="301"/>
    </location>
</feature>
<feature type="strand" evidence="6">
    <location>
        <begin position="307"/>
        <end position="310"/>
    </location>
</feature>
<feature type="helix" evidence="6">
    <location>
        <begin position="311"/>
        <end position="319"/>
    </location>
</feature>
<feature type="strand" evidence="6">
    <location>
        <begin position="322"/>
        <end position="328"/>
    </location>
</feature>
<comment type="function">
    <text evidence="1 2">Catalytic subunit of DNA primase, an RNA polymerase that catalyzes the synthesis of short RNA molecules used as primers for DNA polymerase during DNA replication. The small subunit contains the primase catalytic core and has DNA synthesis activity on its own. Binding to the large subunit stabilizes and modulates the activity, increasing the rate of DNA synthesis while decreasing the length of the DNA fragments, and conferring RNA synthesis capability. The DNA polymerase activity may enable DNA primase to also catalyze primer extension after primer synthesis. May also play a role in DNA repair. Possesses a template-independent 3'-terminal nucleotidyl transferase activity.</text>
</comment>
<comment type="cofactor">
    <cofactor evidence="1">
        <name>Mg(2+)</name>
        <dbReference type="ChEBI" id="CHEBI:18420"/>
    </cofactor>
    <cofactor evidence="1">
        <name>Mn(2+)</name>
        <dbReference type="ChEBI" id="CHEBI:29035"/>
    </cofactor>
</comment>
<comment type="subunit">
    <text evidence="1 2 3">Heterodimer of a small subunit (PriS) and a large subunit (PriL).</text>
</comment>
<comment type="interaction">
    <interactant intactId="EBI-8081502">
        <id>Q97Z83</id>
    </interactant>
    <interactant intactId="EBI-8081454">
        <id>Q9UWW1</id>
        <label>priL</label>
    </interactant>
    <organismsDiffer>false</organismsDiffer>
    <experiments>5</experiments>
</comment>
<comment type="miscellaneous">
    <text evidence="4">The bound zinc ion is not a cofactor. It is bound to a zinc knuckle motif that may be involved in sequence recognition and the binding of ssDNA (PubMed:16273105).</text>
</comment>
<comment type="similarity">
    <text evidence="1">Belongs to the eukaryotic-type primase small subunit family.</text>
</comment>
<keyword id="KW-0002">3D-structure</keyword>
<keyword id="KW-0235">DNA replication</keyword>
<keyword id="KW-0240">DNA-directed RNA polymerase</keyword>
<keyword id="KW-0460">Magnesium</keyword>
<keyword id="KW-0464">Manganese</keyword>
<keyword id="KW-0479">Metal-binding</keyword>
<keyword id="KW-0548">Nucleotidyltransferase</keyword>
<keyword id="KW-0639">Primosome</keyword>
<keyword id="KW-1185">Reference proteome</keyword>
<keyword id="KW-0804">Transcription</keyword>
<keyword id="KW-0808">Transferase</keyword>
<keyword id="KW-0862">Zinc</keyword>
<evidence type="ECO:0000255" key="1">
    <source>
        <dbReference type="HAMAP-Rule" id="MF_00700"/>
    </source>
</evidence>
<evidence type="ECO:0000269" key="2">
    <source>
    </source>
</evidence>
<evidence type="ECO:0000269" key="3">
    <source>
    </source>
</evidence>
<evidence type="ECO:0000305" key="4">
    <source>
    </source>
</evidence>
<evidence type="ECO:0007829" key="5">
    <source>
        <dbReference type="PDB" id="1ZT2"/>
    </source>
</evidence>
<evidence type="ECO:0007829" key="6">
    <source>
        <dbReference type="PDB" id="5OF3"/>
    </source>
</evidence>
<evidence type="ECO:0007829" key="7">
    <source>
        <dbReference type="PDB" id="5OFN"/>
    </source>
</evidence>
<gene>
    <name evidence="1" type="primary">priS</name>
    <name type="synonym">priA</name>
    <name type="ordered locus">SSO1048</name>
</gene>